<feature type="chain" id="PRO_0000256666" description="NADH-ubiquinone oxidoreductase chain 2">
    <location>
        <begin position="1"/>
        <end position="347"/>
    </location>
</feature>
<feature type="transmembrane region" description="Helical" evidence="3">
    <location>
        <begin position="13"/>
        <end position="33"/>
    </location>
</feature>
<feature type="transmembrane region" description="Helical" evidence="3">
    <location>
        <begin position="59"/>
        <end position="79"/>
    </location>
</feature>
<feature type="transmembrane region" description="Helical" evidence="3">
    <location>
        <begin position="96"/>
        <end position="116"/>
    </location>
</feature>
<feature type="transmembrane region" description="Helical" evidence="3">
    <location>
        <begin position="122"/>
        <end position="142"/>
    </location>
</feature>
<feature type="transmembrane region" description="Helical" evidence="3">
    <location>
        <begin position="149"/>
        <end position="169"/>
    </location>
</feature>
<feature type="transmembrane region" description="Helical" evidence="3">
    <location>
        <begin position="178"/>
        <end position="198"/>
    </location>
</feature>
<feature type="transmembrane region" description="Helical" evidence="3">
    <location>
        <begin position="201"/>
        <end position="221"/>
    </location>
</feature>
<feature type="transmembrane region" description="Helical" evidence="3">
    <location>
        <begin position="247"/>
        <end position="267"/>
    </location>
</feature>
<feature type="transmembrane region" description="Helical" evidence="3">
    <location>
        <begin position="274"/>
        <end position="294"/>
    </location>
</feature>
<feature type="transmembrane region" description="Helical" evidence="3">
    <location>
        <begin position="323"/>
        <end position="343"/>
    </location>
</feature>
<protein>
    <recommendedName>
        <fullName evidence="1">NADH-ubiquinone oxidoreductase chain 2</fullName>
        <ecNumber evidence="1">7.1.1.2</ecNumber>
    </recommendedName>
    <alternativeName>
        <fullName>NADH dehydrogenase subunit 2</fullName>
    </alternativeName>
</protein>
<gene>
    <name evidence="1" type="primary">MT-ND2</name>
    <name type="synonym">MTND2</name>
    <name type="synonym">NADH2</name>
    <name type="synonym">ND2</name>
</gene>
<geneLocation type="mitochondrion"/>
<reference key="1">
    <citation type="submission" date="2003-12" db="EMBL/GenBank/DDBJ databases">
        <title>Bats and birds: flying in the face of mtDNA evolutionary rates.</title>
        <authorList>
            <person name="Worthington Wilmer J.M."/>
            <person name="Schneider C.J."/>
            <person name="Sorenson M.D."/>
        </authorList>
    </citation>
    <scope>NUCLEOTIDE SEQUENCE [GENOMIC DNA]</scope>
    <source>
        <strain>Isolate SL1</strain>
    </source>
</reference>
<accession>Q330E9</accession>
<proteinExistence type="inferred from homology"/>
<organism>
    <name type="scientific">Megaderma spasma</name>
    <name type="common">Lesser false vampire bat</name>
    <name type="synonym">Vespertilio spasma</name>
    <dbReference type="NCBI Taxonomy" id="9414"/>
    <lineage>
        <taxon>Eukaryota</taxon>
        <taxon>Metazoa</taxon>
        <taxon>Chordata</taxon>
        <taxon>Craniata</taxon>
        <taxon>Vertebrata</taxon>
        <taxon>Euteleostomi</taxon>
        <taxon>Mammalia</taxon>
        <taxon>Eutheria</taxon>
        <taxon>Laurasiatheria</taxon>
        <taxon>Chiroptera</taxon>
        <taxon>Yinpterochiroptera</taxon>
        <taxon>Rhinolophoidea</taxon>
        <taxon>Megadermatidae</taxon>
        <taxon>Megaderma</taxon>
    </lineage>
</organism>
<sequence length="347" mass="38364">MNPLASIMITLTIILGTMIVMTSSHWLLVWIGFEMNMLAIIPVLMKQHSPRAVEAATKYFLTQATASMLLMLAVVTNLLYSGQWTVTNITNPLASAVMTLALVMKLGLSPFHFWVPEVAQGIPLSSGLVLLTWQKLAPLSVLYQISHSVSPTLLLTVSLMSIAVGGWGGLNQTQLRKILAYSSIAHMGWMTAVLAYNPTLTLLNLTLYILMTTTTFLLFMFNSSTTTLTLSHSWNKSPMIATSTLTIMLSLGGLPPLTGFLPKWMIIQELTKNESLLLPTLMAMMALLSLYFYMRLTYSTSLTLFPSMNNTKMKWHLNNTKKVPLLPPMITLFTLALPLAPALSTLY</sequence>
<evidence type="ECO:0000250" key="1">
    <source>
        <dbReference type="UniProtKB" id="P03891"/>
    </source>
</evidence>
<evidence type="ECO:0000250" key="2">
    <source>
        <dbReference type="UniProtKB" id="P03892"/>
    </source>
</evidence>
<evidence type="ECO:0000255" key="3"/>
<evidence type="ECO:0000305" key="4"/>
<keyword id="KW-0249">Electron transport</keyword>
<keyword id="KW-0472">Membrane</keyword>
<keyword id="KW-0496">Mitochondrion</keyword>
<keyword id="KW-0999">Mitochondrion inner membrane</keyword>
<keyword id="KW-0520">NAD</keyword>
<keyword id="KW-0679">Respiratory chain</keyword>
<keyword id="KW-1278">Translocase</keyword>
<keyword id="KW-0812">Transmembrane</keyword>
<keyword id="KW-1133">Transmembrane helix</keyword>
<keyword id="KW-0813">Transport</keyword>
<keyword id="KW-0830">Ubiquinone</keyword>
<comment type="function">
    <text evidence="1">Core subunit of the mitochondrial membrane respiratory chain NADH dehydrogenase (Complex I) which catalyzes electron transfer from NADH through the respiratory chain, using ubiquinone as an electron acceptor. Essential for the catalytic activity and assembly of complex I.</text>
</comment>
<comment type="catalytic activity">
    <reaction evidence="1">
        <text>a ubiquinone + NADH + 5 H(+)(in) = a ubiquinol + NAD(+) + 4 H(+)(out)</text>
        <dbReference type="Rhea" id="RHEA:29091"/>
        <dbReference type="Rhea" id="RHEA-COMP:9565"/>
        <dbReference type="Rhea" id="RHEA-COMP:9566"/>
        <dbReference type="ChEBI" id="CHEBI:15378"/>
        <dbReference type="ChEBI" id="CHEBI:16389"/>
        <dbReference type="ChEBI" id="CHEBI:17976"/>
        <dbReference type="ChEBI" id="CHEBI:57540"/>
        <dbReference type="ChEBI" id="CHEBI:57945"/>
        <dbReference type="EC" id="7.1.1.2"/>
    </reaction>
</comment>
<comment type="subunit">
    <text evidence="1 2">Core subunit of respiratory chain NADH dehydrogenase (Complex I) which is composed of 45 different subunits. Interacts with TMEM242 (By similarity).</text>
</comment>
<comment type="subcellular location">
    <subcellularLocation>
        <location evidence="2">Mitochondrion inner membrane</location>
        <topology evidence="3">Multi-pass membrane protein</topology>
    </subcellularLocation>
</comment>
<comment type="similarity">
    <text evidence="4">Belongs to the complex I subunit 2 family.</text>
</comment>
<dbReference type="EC" id="7.1.1.2" evidence="1"/>
<dbReference type="EMBL" id="AY504543">
    <property type="protein sequence ID" value="AAS91408.1"/>
    <property type="molecule type" value="Genomic_DNA"/>
</dbReference>
<dbReference type="SMR" id="Q330E9"/>
<dbReference type="GO" id="GO:0005743">
    <property type="term" value="C:mitochondrial inner membrane"/>
    <property type="evidence" value="ECO:0000250"/>
    <property type="project" value="UniProtKB"/>
</dbReference>
<dbReference type="GO" id="GO:0008137">
    <property type="term" value="F:NADH dehydrogenase (ubiquinone) activity"/>
    <property type="evidence" value="ECO:0000250"/>
    <property type="project" value="UniProtKB"/>
</dbReference>
<dbReference type="GO" id="GO:0006120">
    <property type="term" value="P:mitochondrial electron transport, NADH to ubiquinone"/>
    <property type="evidence" value="ECO:0000250"/>
    <property type="project" value="UniProtKB"/>
</dbReference>
<dbReference type="GO" id="GO:0032981">
    <property type="term" value="P:mitochondrial respiratory chain complex I assembly"/>
    <property type="evidence" value="ECO:0000250"/>
    <property type="project" value="UniProtKB"/>
</dbReference>
<dbReference type="InterPro" id="IPR050175">
    <property type="entry name" value="Complex_I_Subunit_2"/>
</dbReference>
<dbReference type="InterPro" id="IPR010933">
    <property type="entry name" value="NADH_DH_su2_C"/>
</dbReference>
<dbReference type="InterPro" id="IPR003917">
    <property type="entry name" value="NADH_UbQ_OxRdtase_chain2"/>
</dbReference>
<dbReference type="InterPro" id="IPR001750">
    <property type="entry name" value="ND/Mrp_TM"/>
</dbReference>
<dbReference type="PANTHER" id="PTHR46552">
    <property type="entry name" value="NADH-UBIQUINONE OXIDOREDUCTASE CHAIN 2"/>
    <property type="match status" value="1"/>
</dbReference>
<dbReference type="PANTHER" id="PTHR46552:SF1">
    <property type="entry name" value="NADH-UBIQUINONE OXIDOREDUCTASE CHAIN 2"/>
    <property type="match status" value="1"/>
</dbReference>
<dbReference type="Pfam" id="PF06444">
    <property type="entry name" value="NADH_dehy_S2_C"/>
    <property type="match status" value="1"/>
</dbReference>
<dbReference type="Pfam" id="PF00361">
    <property type="entry name" value="Proton_antipo_M"/>
    <property type="match status" value="1"/>
</dbReference>
<dbReference type="PRINTS" id="PR01436">
    <property type="entry name" value="NADHDHGNASE2"/>
</dbReference>
<name>NU2M_MEGSP</name>